<sequence>MAQQGSGYQARYKRILLKLSGEALMGSEEFGIDPKVLDRMALEVGQLVGIGVQVGLVIGGGNLFRGAALSAAGMDRVTGDHMGMLATVMNALAMRDALERANITAIVMSAISMLGVTDHYDRRKAMRHLSAKEVVIFAAGTGNPFFTTDSAACLRAIEIDADVVLKATKVDGVYTADPFKDPNAEKFDHLTYDEVLDRKLGVMDLTAICLCRDHKMPLRVFNMNKPGALLNIVHGGAEGTLIEEAQQ</sequence>
<proteinExistence type="inferred from homology"/>
<organism>
    <name type="scientific">Pseudomonas savastanoi pv. phaseolicola (strain 1448A / Race 6)</name>
    <name type="common">Pseudomonas syringae pv. phaseolicola (strain 1448A / Race 6)</name>
    <dbReference type="NCBI Taxonomy" id="264730"/>
    <lineage>
        <taxon>Bacteria</taxon>
        <taxon>Pseudomonadati</taxon>
        <taxon>Pseudomonadota</taxon>
        <taxon>Gammaproteobacteria</taxon>
        <taxon>Pseudomonadales</taxon>
        <taxon>Pseudomonadaceae</taxon>
        <taxon>Pseudomonas</taxon>
    </lineage>
</organism>
<dbReference type="EC" id="2.7.4.22" evidence="1"/>
<dbReference type="EMBL" id="CP000058">
    <property type="protein sequence ID" value="AAZ33938.1"/>
    <property type="molecule type" value="Genomic_DNA"/>
</dbReference>
<dbReference type="RefSeq" id="WP_002554728.1">
    <property type="nucleotide sequence ID" value="NC_005773.3"/>
</dbReference>
<dbReference type="SMR" id="Q48F61"/>
<dbReference type="GeneID" id="96217746"/>
<dbReference type="KEGG" id="psp:PSPPH_3838"/>
<dbReference type="eggNOG" id="COG0528">
    <property type="taxonomic scope" value="Bacteria"/>
</dbReference>
<dbReference type="HOGENOM" id="CLU_033861_0_0_6"/>
<dbReference type="UniPathway" id="UPA00159">
    <property type="reaction ID" value="UER00275"/>
</dbReference>
<dbReference type="Proteomes" id="UP000000551">
    <property type="component" value="Chromosome"/>
</dbReference>
<dbReference type="GO" id="GO:0005829">
    <property type="term" value="C:cytosol"/>
    <property type="evidence" value="ECO:0007669"/>
    <property type="project" value="TreeGrafter"/>
</dbReference>
<dbReference type="GO" id="GO:0005524">
    <property type="term" value="F:ATP binding"/>
    <property type="evidence" value="ECO:0007669"/>
    <property type="project" value="UniProtKB-KW"/>
</dbReference>
<dbReference type="GO" id="GO:0033862">
    <property type="term" value="F:UMP kinase activity"/>
    <property type="evidence" value="ECO:0007669"/>
    <property type="project" value="UniProtKB-EC"/>
</dbReference>
<dbReference type="GO" id="GO:0044210">
    <property type="term" value="P:'de novo' CTP biosynthetic process"/>
    <property type="evidence" value="ECO:0007669"/>
    <property type="project" value="UniProtKB-UniRule"/>
</dbReference>
<dbReference type="GO" id="GO:0006225">
    <property type="term" value="P:UDP biosynthetic process"/>
    <property type="evidence" value="ECO:0007669"/>
    <property type="project" value="TreeGrafter"/>
</dbReference>
<dbReference type="CDD" id="cd04254">
    <property type="entry name" value="AAK_UMPK-PyrH-Ec"/>
    <property type="match status" value="1"/>
</dbReference>
<dbReference type="FunFam" id="3.40.1160.10:FF:000001">
    <property type="entry name" value="Uridylate kinase"/>
    <property type="match status" value="1"/>
</dbReference>
<dbReference type="Gene3D" id="3.40.1160.10">
    <property type="entry name" value="Acetylglutamate kinase-like"/>
    <property type="match status" value="1"/>
</dbReference>
<dbReference type="HAMAP" id="MF_01220_B">
    <property type="entry name" value="PyrH_B"/>
    <property type="match status" value="1"/>
</dbReference>
<dbReference type="InterPro" id="IPR036393">
    <property type="entry name" value="AceGlu_kinase-like_sf"/>
</dbReference>
<dbReference type="InterPro" id="IPR001048">
    <property type="entry name" value="Asp/Glu/Uridylate_kinase"/>
</dbReference>
<dbReference type="InterPro" id="IPR011817">
    <property type="entry name" value="Uridylate_kinase"/>
</dbReference>
<dbReference type="InterPro" id="IPR015963">
    <property type="entry name" value="Uridylate_kinase_bac"/>
</dbReference>
<dbReference type="NCBIfam" id="TIGR02075">
    <property type="entry name" value="pyrH_bact"/>
    <property type="match status" value="1"/>
</dbReference>
<dbReference type="PANTHER" id="PTHR42833">
    <property type="entry name" value="URIDYLATE KINASE"/>
    <property type="match status" value="1"/>
</dbReference>
<dbReference type="PANTHER" id="PTHR42833:SF4">
    <property type="entry name" value="URIDYLATE KINASE PUMPKIN, CHLOROPLASTIC"/>
    <property type="match status" value="1"/>
</dbReference>
<dbReference type="Pfam" id="PF00696">
    <property type="entry name" value="AA_kinase"/>
    <property type="match status" value="1"/>
</dbReference>
<dbReference type="PIRSF" id="PIRSF005650">
    <property type="entry name" value="Uridylate_kin"/>
    <property type="match status" value="1"/>
</dbReference>
<dbReference type="SUPFAM" id="SSF53633">
    <property type="entry name" value="Carbamate kinase-like"/>
    <property type="match status" value="1"/>
</dbReference>
<evidence type="ECO:0000255" key="1">
    <source>
        <dbReference type="HAMAP-Rule" id="MF_01220"/>
    </source>
</evidence>
<accession>Q48F61</accession>
<keyword id="KW-0067">ATP-binding</keyword>
<keyword id="KW-0963">Cytoplasm</keyword>
<keyword id="KW-0418">Kinase</keyword>
<keyword id="KW-0547">Nucleotide-binding</keyword>
<keyword id="KW-0665">Pyrimidine biosynthesis</keyword>
<keyword id="KW-0808">Transferase</keyword>
<reference key="1">
    <citation type="journal article" date="2005" name="J. Bacteriol.">
        <title>Whole-genome sequence analysis of Pseudomonas syringae pv. phaseolicola 1448A reveals divergence among pathovars in genes involved in virulence and transposition.</title>
        <authorList>
            <person name="Joardar V."/>
            <person name="Lindeberg M."/>
            <person name="Jackson R.W."/>
            <person name="Selengut J."/>
            <person name="Dodson R."/>
            <person name="Brinkac L.M."/>
            <person name="Daugherty S.C."/>
            <person name="DeBoy R.T."/>
            <person name="Durkin A.S."/>
            <person name="Gwinn Giglio M."/>
            <person name="Madupu R."/>
            <person name="Nelson W.C."/>
            <person name="Rosovitz M.J."/>
            <person name="Sullivan S.A."/>
            <person name="Crabtree J."/>
            <person name="Creasy T."/>
            <person name="Davidsen T.M."/>
            <person name="Haft D.H."/>
            <person name="Zafar N."/>
            <person name="Zhou L."/>
            <person name="Halpin R."/>
            <person name="Holley T."/>
            <person name="Khouri H.M."/>
            <person name="Feldblyum T.V."/>
            <person name="White O."/>
            <person name="Fraser C.M."/>
            <person name="Chatterjee A.K."/>
            <person name="Cartinhour S."/>
            <person name="Schneider D."/>
            <person name="Mansfield J.W."/>
            <person name="Collmer A."/>
            <person name="Buell R."/>
        </authorList>
    </citation>
    <scope>NUCLEOTIDE SEQUENCE [LARGE SCALE GENOMIC DNA]</scope>
    <source>
        <strain>1448A / Race 6</strain>
    </source>
</reference>
<gene>
    <name evidence="1" type="primary">pyrH</name>
    <name type="ordered locus">PSPPH_3838</name>
</gene>
<name>PYRH_PSE14</name>
<feature type="chain" id="PRO_1000053978" description="Uridylate kinase">
    <location>
        <begin position="1"/>
        <end position="247"/>
    </location>
</feature>
<feature type="binding site" evidence="1">
    <location>
        <begin position="18"/>
        <end position="21"/>
    </location>
    <ligand>
        <name>ATP</name>
        <dbReference type="ChEBI" id="CHEBI:30616"/>
    </ligand>
</feature>
<feature type="binding site" evidence="1">
    <location>
        <position position="60"/>
    </location>
    <ligand>
        <name>UMP</name>
        <dbReference type="ChEBI" id="CHEBI:57865"/>
    </ligand>
</feature>
<feature type="binding site" evidence="1">
    <location>
        <position position="61"/>
    </location>
    <ligand>
        <name>ATP</name>
        <dbReference type="ChEBI" id="CHEBI:30616"/>
    </ligand>
</feature>
<feature type="binding site" evidence="1">
    <location>
        <position position="65"/>
    </location>
    <ligand>
        <name>ATP</name>
        <dbReference type="ChEBI" id="CHEBI:30616"/>
    </ligand>
</feature>
<feature type="binding site" evidence="1">
    <location>
        <position position="80"/>
    </location>
    <ligand>
        <name>UMP</name>
        <dbReference type="ChEBI" id="CHEBI:57865"/>
    </ligand>
</feature>
<feature type="binding site" evidence="1">
    <location>
        <begin position="141"/>
        <end position="148"/>
    </location>
    <ligand>
        <name>UMP</name>
        <dbReference type="ChEBI" id="CHEBI:57865"/>
    </ligand>
</feature>
<feature type="binding site" evidence="1">
    <location>
        <position position="168"/>
    </location>
    <ligand>
        <name>ATP</name>
        <dbReference type="ChEBI" id="CHEBI:30616"/>
    </ligand>
</feature>
<feature type="binding site" evidence="1">
    <location>
        <position position="174"/>
    </location>
    <ligand>
        <name>ATP</name>
        <dbReference type="ChEBI" id="CHEBI:30616"/>
    </ligand>
</feature>
<feature type="binding site" evidence="1">
    <location>
        <position position="177"/>
    </location>
    <ligand>
        <name>ATP</name>
        <dbReference type="ChEBI" id="CHEBI:30616"/>
    </ligand>
</feature>
<protein>
    <recommendedName>
        <fullName evidence="1">Uridylate kinase</fullName>
        <shortName evidence="1">UK</shortName>
        <ecNumber evidence="1">2.7.4.22</ecNumber>
    </recommendedName>
    <alternativeName>
        <fullName evidence="1">Uridine monophosphate kinase</fullName>
        <shortName evidence="1">UMP kinase</shortName>
        <shortName evidence="1">UMPK</shortName>
    </alternativeName>
</protein>
<comment type="function">
    <text evidence="1">Catalyzes the reversible phosphorylation of UMP to UDP.</text>
</comment>
<comment type="catalytic activity">
    <reaction evidence="1">
        <text>UMP + ATP = UDP + ADP</text>
        <dbReference type="Rhea" id="RHEA:24400"/>
        <dbReference type="ChEBI" id="CHEBI:30616"/>
        <dbReference type="ChEBI" id="CHEBI:57865"/>
        <dbReference type="ChEBI" id="CHEBI:58223"/>
        <dbReference type="ChEBI" id="CHEBI:456216"/>
        <dbReference type="EC" id="2.7.4.22"/>
    </reaction>
</comment>
<comment type="activity regulation">
    <text evidence="1">Inhibited by UTP.</text>
</comment>
<comment type="pathway">
    <text evidence="1">Pyrimidine metabolism; CTP biosynthesis via de novo pathway; UDP from UMP (UMPK route): step 1/1.</text>
</comment>
<comment type="subunit">
    <text evidence="1">Homohexamer.</text>
</comment>
<comment type="subcellular location">
    <subcellularLocation>
        <location evidence="1">Cytoplasm</location>
    </subcellularLocation>
</comment>
<comment type="similarity">
    <text evidence="1">Belongs to the UMP kinase family.</text>
</comment>